<keyword id="KW-0072">Autophagy</keyword>
<keyword id="KW-0963">Cytoplasm</keyword>
<keyword id="KW-1015">Disulfide bond</keyword>
<keyword id="KW-0378">Hydrolase</keyword>
<keyword id="KW-1017">Isopeptide bond</keyword>
<keyword id="KW-0539">Nucleus</keyword>
<keyword id="KW-0597">Phosphoprotein</keyword>
<keyword id="KW-0645">Protease</keyword>
<keyword id="KW-0653">Protein transport</keyword>
<keyword id="KW-0788">Thiol protease</keyword>
<keyword id="KW-0813">Transport</keyword>
<reference key="1">
    <citation type="journal article" date="2007" name="Proc. Natl. Acad. Sci. U.S.A.">
        <title>Genome sequencing and comparative analysis of Saccharomyces cerevisiae strain YJM789.</title>
        <authorList>
            <person name="Wei W."/>
            <person name="McCusker J.H."/>
            <person name="Hyman R.W."/>
            <person name="Jones T."/>
            <person name="Ning Y."/>
            <person name="Cao Z."/>
            <person name="Gu Z."/>
            <person name="Bruno D."/>
            <person name="Miranda M."/>
            <person name="Nguyen M."/>
            <person name="Wilhelmy J."/>
            <person name="Komp C."/>
            <person name="Tamse R."/>
            <person name="Wang X."/>
            <person name="Jia P."/>
            <person name="Luedi P."/>
            <person name="Oefner P.J."/>
            <person name="David L."/>
            <person name="Dietrich F.S."/>
            <person name="Li Y."/>
            <person name="Davis R.W."/>
            <person name="Steinmetz L.M."/>
        </authorList>
    </citation>
    <scope>NUCLEOTIDE SEQUENCE [LARGE SCALE GENOMIC DNA]</scope>
    <source>
        <strain>YJM789</strain>
    </source>
</reference>
<proteinExistence type="inferred from homology"/>
<feature type="chain" id="PRO_0000317847" description="Cysteine protease ATG4">
    <location>
        <begin position="1"/>
        <end position="494"/>
    </location>
</feature>
<feature type="short sequence motif" description="APEAR" evidence="1">
    <location>
        <begin position="102"/>
        <end position="105"/>
    </location>
</feature>
<feature type="short sequence motif" description="LIR" evidence="1">
    <location>
        <begin position="424"/>
        <end position="427"/>
    </location>
</feature>
<feature type="active site" description="Nucleophile" evidence="2">
    <location>
        <position position="147"/>
    </location>
</feature>
<feature type="active site" evidence="2">
    <location>
        <position position="322"/>
    </location>
</feature>
<feature type="active site" evidence="2">
    <location>
        <position position="324"/>
    </location>
</feature>
<feature type="modified residue" description="Phosphoserine" evidence="1">
    <location>
        <position position="307"/>
    </location>
</feature>
<feature type="modified residue" description="Phosphoserine" evidence="1">
    <location>
        <position position="488"/>
    </location>
</feature>
<feature type="disulfide bond" evidence="1">
    <location>
        <begin position="338"/>
        <end position="394"/>
    </location>
</feature>
<protein>
    <recommendedName>
        <fullName>Cysteine protease ATG4</fullName>
        <ecNumber>3.4.22.-</ecNumber>
    </recommendedName>
    <alternativeName>
        <fullName>Autophagy-related protein 4</fullName>
    </alternativeName>
</protein>
<evidence type="ECO:0000250" key="1">
    <source>
        <dbReference type="UniProtKB" id="P53867"/>
    </source>
</evidence>
<evidence type="ECO:0000250" key="2">
    <source>
        <dbReference type="UniProtKB" id="Q9Y4P1"/>
    </source>
</evidence>
<evidence type="ECO:0000305" key="3"/>
<name>ATG4_YEAS7</name>
<dbReference type="EC" id="3.4.22.-"/>
<dbReference type="EMBL" id="AAFW02000067">
    <property type="protein sequence ID" value="EDN62599.1"/>
    <property type="molecule type" value="Genomic_DNA"/>
</dbReference>
<dbReference type="SMR" id="A6ZRL7"/>
<dbReference type="MEROPS" id="C54.001"/>
<dbReference type="HOGENOM" id="CLU_021259_5_3_1"/>
<dbReference type="Proteomes" id="UP000007060">
    <property type="component" value="Unassembled WGS sequence"/>
</dbReference>
<dbReference type="GO" id="GO:0005737">
    <property type="term" value="C:cytoplasm"/>
    <property type="evidence" value="ECO:0000250"/>
    <property type="project" value="UniProtKB"/>
</dbReference>
<dbReference type="GO" id="GO:0005829">
    <property type="term" value="C:cytosol"/>
    <property type="evidence" value="ECO:0000250"/>
    <property type="project" value="UniProtKB"/>
</dbReference>
<dbReference type="GO" id="GO:0005634">
    <property type="term" value="C:nucleus"/>
    <property type="evidence" value="ECO:0007669"/>
    <property type="project" value="UniProtKB-SubCell"/>
</dbReference>
<dbReference type="GO" id="GO:0000407">
    <property type="term" value="C:phagophore assembly site"/>
    <property type="evidence" value="ECO:0007669"/>
    <property type="project" value="UniProtKB-SubCell"/>
</dbReference>
<dbReference type="GO" id="GO:0004197">
    <property type="term" value="F:cysteine-type endopeptidase activity"/>
    <property type="evidence" value="ECO:0007669"/>
    <property type="project" value="TreeGrafter"/>
</dbReference>
<dbReference type="GO" id="GO:0019786">
    <property type="term" value="F:protein-phosphatidylethanolamide deconjugating activity"/>
    <property type="evidence" value="ECO:0007669"/>
    <property type="project" value="InterPro"/>
</dbReference>
<dbReference type="GO" id="GO:0035973">
    <property type="term" value="P:aggrephagy"/>
    <property type="evidence" value="ECO:0007669"/>
    <property type="project" value="TreeGrafter"/>
</dbReference>
<dbReference type="GO" id="GO:0000045">
    <property type="term" value="P:autophagosome assembly"/>
    <property type="evidence" value="ECO:0000250"/>
    <property type="project" value="UniProtKB"/>
</dbReference>
<dbReference type="GO" id="GO:0006914">
    <property type="term" value="P:autophagy"/>
    <property type="evidence" value="ECO:0000250"/>
    <property type="project" value="UniProtKB"/>
</dbReference>
<dbReference type="GO" id="GO:0000423">
    <property type="term" value="P:mitophagy"/>
    <property type="evidence" value="ECO:0007669"/>
    <property type="project" value="TreeGrafter"/>
</dbReference>
<dbReference type="GO" id="GO:0034727">
    <property type="term" value="P:piecemeal microautophagy of the nucleus"/>
    <property type="evidence" value="ECO:0007669"/>
    <property type="project" value="TreeGrafter"/>
</dbReference>
<dbReference type="GO" id="GO:0016485">
    <property type="term" value="P:protein processing"/>
    <property type="evidence" value="ECO:0007669"/>
    <property type="project" value="TreeGrafter"/>
</dbReference>
<dbReference type="GO" id="GO:0006612">
    <property type="term" value="P:protein targeting to membrane"/>
    <property type="evidence" value="ECO:0000250"/>
    <property type="project" value="UniProtKB"/>
</dbReference>
<dbReference type="GO" id="GO:0015031">
    <property type="term" value="P:protein transport"/>
    <property type="evidence" value="ECO:0007669"/>
    <property type="project" value="UniProtKB-KW"/>
</dbReference>
<dbReference type="GO" id="GO:0006508">
    <property type="term" value="P:proteolysis"/>
    <property type="evidence" value="ECO:0000250"/>
    <property type="project" value="UniProtKB"/>
</dbReference>
<dbReference type="InterPro" id="IPR038765">
    <property type="entry name" value="Papain-like_cys_pep_sf"/>
</dbReference>
<dbReference type="InterPro" id="IPR005078">
    <property type="entry name" value="Peptidase_C54"/>
</dbReference>
<dbReference type="InterPro" id="IPR046792">
    <property type="entry name" value="Peptidase_C54_cat"/>
</dbReference>
<dbReference type="PANTHER" id="PTHR22624:SF49">
    <property type="entry name" value="CYSTEINE PROTEASE"/>
    <property type="match status" value="1"/>
</dbReference>
<dbReference type="PANTHER" id="PTHR22624">
    <property type="entry name" value="CYSTEINE PROTEASE ATG4"/>
    <property type="match status" value="1"/>
</dbReference>
<dbReference type="Pfam" id="PF03416">
    <property type="entry name" value="Peptidase_C54"/>
    <property type="match status" value="1"/>
</dbReference>
<dbReference type="SUPFAM" id="SSF54001">
    <property type="entry name" value="Cysteine proteinases"/>
    <property type="match status" value="1"/>
</dbReference>
<accession>A6ZRL7</accession>
<sequence>MQRWLQLWKMDLVQKVSHGVFEGSSEEPAALMNHDYIVLGEVYPERDEESGAEQCEQDCRYRGEAVSDGFLSSLFGREISSYTKEFLLDVQSRVNFTYRTRFVPIARAPDGPSPLSLNLLVRTNPISTIEDYIANPDCFNTDIGWGCMIRTGQSLLGNALQILHLGRDFRVNGNESLERESKFVNWFNDTPEAPFSLHNFVSAGTELSDKRPGEWFGPAATARSIQSLIYGFPECGIDDCIVSVSSGDIYENEVEKVFAENPNSRILFLLGVKLGINAVNESYRESICGILSSTQSVGIAGGRPSSSLYFFGYQGNEFLHFDPHIPQPAVEDSFVESCHTSKFGKLQLSEMDPSMLIGILIKGEKDWQQWKLEVAESAIINVLAKRMDDFDVSCSMDDVESVSSNSMKKDASNNENLGVLEGDYVDIGAIFPHTTNTEDVDEYDCFQDIHCKKQKIVVMGNTHTVNANLTDYEVEGVLVEKETVGIHSPIDEKC</sequence>
<comment type="function">
    <text evidence="1">Cysteine protease that plays a key role in cytoplasm to vacuole transport (Cvt) and autophagy by mediating both proteolytic activation and delipidation of ATG8. Required for selective autophagic degradation of the nucleus (nucleophagy) as well as for mitophagy which contributes to regulate mitochondrial quantity and quality by eliminating the mitochondria to a basal level to fulfill cellular energy requirements and preventing excess ROS production. The protease activity is required for proteolytic activation of ATG8: cleaves the C-terminal amino acid of ATG8 to reveal a C-terminal glycine. ATG8 ubiquitin-like activity requires the exposure of the glycine at the C-terminus for its conjugation to phosphatidylethanolamine (PE) and its insertion to membranes, which is necessary for autophagy. The ATG8-PE conjugate mediates tethering between adjacent membranes and stimulates membrane hemifusion, leading to expansion of the autophagosomal membrane during autophagy. In addition to the protease activity, also catalyzes deconjugation of PE-conjugated forms of ATG8 during macroautophagy: ATG8 delipidation is required to release the protein from membranes, which facilitates multiple events during macroautophagy, and especially for efficient autophagosome biogenesis, the assembly of ATG9-containing tubulovesicular clusters into phagophores/autophagosomes, and for the disassembly of PAS-associated ATG components. ATG8 delipidation by ATG4 also recycles ATG8-PE generated on inappropriate membranes to maintain a reservoir of unlipidated ATG8 that is required for autophagosome formation at the PAS.</text>
</comment>
<comment type="catalytic activity">
    <reaction evidence="1">
        <text>[protein]-C-terminal L-amino acid-glycyl-phosphatidylethanolamide + H2O = [protein]-C-terminal L-amino acid-glycine + a 1,2-diacyl-sn-glycero-3-phosphoethanolamine</text>
        <dbReference type="Rhea" id="RHEA:67548"/>
        <dbReference type="Rhea" id="RHEA-COMP:17323"/>
        <dbReference type="Rhea" id="RHEA-COMP:17324"/>
        <dbReference type="ChEBI" id="CHEBI:15377"/>
        <dbReference type="ChEBI" id="CHEBI:64612"/>
        <dbReference type="ChEBI" id="CHEBI:172940"/>
        <dbReference type="ChEBI" id="CHEBI:172941"/>
    </reaction>
    <physiologicalReaction direction="left-to-right" evidence="1">
        <dbReference type="Rhea" id="RHEA:67549"/>
    </physiologicalReaction>
</comment>
<comment type="subunit">
    <text evidence="1">Interacts with ATG8. Interacts with TUB1 and TUB2.</text>
</comment>
<comment type="subcellular location">
    <subcellularLocation>
        <location evidence="1">Cytoplasm</location>
    </subcellularLocation>
    <subcellularLocation>
        <location evidence="1">Nucleus</location>
    </subcellularLocation>
    <subcellularLocation>
        <location evidence="1">Preautophagosomal structure</location>
    </subcellularLocation>
</comment>
<comment type="domain">
    <text evidence="1">The APEAR motif (ATG8-PE association region) plays a key role in ATG4 recruitment to autophagosomal membranes and ATG8 deconjugation. The LIR (LC3-interacting region act cooperatively) and APEAR motifs for the interaction with ATG8.</text>
</comment>
<comment type="PTM">
    <text evidence="1">Phosphorylation at Ser-307 by ATG1 inhibits autophagy: it takes place on autophagosome membranes and decreases its interaction with ATG8, thereby impairing deconjugation of PE-conjugated forms of ATG8.</text>
</comment>
<comment type="PTM">
    <text evidence="1">Formation of a disulfide bond between Cys-338 and Cys-394 leads to reduced autophagy. The disulfide bond is reduced by thioredoxin.</text>
</comment>
<comment type="similarity">
    <text evidence="3">Belongs to the peptidase C54 family.</text>
</comment>
<organism>
    <name type="scientific">Saccharomyces cerevisiae (strain YJM789)</name>
    <name type="common">Baker's yeast</name>
    <dbReference type="NCBI Taxonomy" id="307796"/>
    <lineage>
        <taxon>Eukaryota</taxon>
        <taxon>Fungi</taxon>
        <taxon>Dikarya</taxon>
        <taxon>Ascomycota</taxon>
        <taxon>Saccharomycotina</taxon>
        <taxon>Saccharomycetes</taxon>
        <taxon>Saccharomycetales</taxon>
        <taxon>Saccharomycetaceae</taxon>
        <taxon>Saccharomyces</taxon>
    </lineage>
</organism>
<gene>
    <name type="primary">ATG4</name>
    <name type="synonym">APG4</name>
    <name type="synonym">AUT2</name>
    <name type="ORF">SCY_4578</name>
</gene>